<protein>
    <recommendedName>
        <fullName>Noggin</fullName>
    </recommendedName>
</protein>
<comment type="function">
    <text evidence="3">Patterns the embryo by interrupting bone morphogenetic proteins (BMP) signaling. Binds BMP-4 and BMP-2 with high affinity. Can abolish BMP-4 activity by blocking binding to cognate cell-surface receptors. Capable of inducing dorsal development in embryos. Causes dorsal mesodermal differentiation of animal cap ectoderm when coexpressed with xWNT-8 and nuclear, sequence-specific DNA-binding protein xBRA. None of these molecules causes dorsal mesoderm formation when expressed alone.</text>
</comment>
<comment type="subunit">
    <text>Homodimer.</text>
</comment>
<comment type="subcellular location">
    <subcellularLocation>
        <location>Secreted</location>
    </subcellularLocation>
</comment>
<comment type="developmental stage">
    <text>Expressed both maternally and zygotically. Expression starts at late blastula stages in the dorsal marginal zone and persists throughout gastrulation in the prechordal plat and the presumptive notochord, both derivatives of the Spemann organizer. At later stages expression is initiated at several new sites, including the roof plate of the neural tube and skeletogenic cells in the branchial arches.</text>
</comment>
<comment type="induction">
    <text>By activin.</text>
</comment>
<comment type="similarity">
    <text evidence="4">Belongs to the noggin family.</text>
</comment>
<accession>P49011</accession>
<feature type="signal peptide" evidence="2">
    <location>
        <begin position="1"/>
        <end position="19"/>
    </location>
</feature>
<feature type="chain" id="PRO_0000019821" description="Noggin">
    <location>
        <begin position="20"/>
        <end position="222"/>
    </location>
</feature>
<feature type="glycosylation site" description="N-linked (GlcNAc...) asparagine" evidence="2">
    <location>
        <position position="61"/>
    </location>
</feature>
<feature type="disulfide bond" evidence="1">
    <location>
        <begin position="145"/>
        <end position="182"/>
    </location>
</feature>
<feature type="disulfide bond" evidence="1">
    <location>
        <begin position="168"/>
        <end position="218"/>
    </location>
</feature>
<feature type="disulfide bond" evidence="1">
    <location>
        <begin position="174"/>
        <end position="220"/>
    </location>
</feature>
<feature type="disulfide bond" evidence="1">
    <location>
        <begin position="197"/>
        <end position="205"/>
    </location>
</feature>
<proteinExistence type="evidence at protein level"/>
<evidence type="ECO:0000250" key="1"/>
<evidence type="ECO:0000255" key="2"/>
<evidence type="ECO:0000269" key="3">
    <source>
    </source>
</evidence>
<evidence type="ECO:0000305" key="4"/>
<dbReference type="EMBL" id="M98807">
    <property type="protein sequence ID" value="AAA49916.1"/>
    <property type="molecule type" value="mRNA"/>
</dbReference>
<dbReference type="PIR" id="A43343">
    <property type="entry name" value="A43343"/>
</dbReference>
<dbReference type="RefSeq" id="NP_001079113.1">
    <property type="nucleotide sequence ID" value="NM_001085644.1"/>
</dbReference>
<dbReference type="SMR" id="P49011"/>
<dbReference type="GlyCosmos" id="P49011">
    <property type="glycosylation" value="1 site, No reported glycans"/>
</dbReference>
<dbReference type="GeneID" id="373646"/>
<dbReference type="KEGG" id="xla:373646"/>
<dbReference type="AGR" id="Xenbase:XB-GENE-864891"/>
<dbReference type="CTD" id="373646"/>
<dbReference type="Xenbase" id="XB-GENE-864891">
    <property type="gene designation" value="nog.L"/>
</dbReference>
<dbReference type="OMA" id="LWSHTFC"/>
<dbReference type="OrthoDB" id="5950649at2759"/>
<dbReference type="Proteomes" id="UP000186698">
    <property type="component" value="Chromosome 9_10L"/>
</dbReference>
<dbReference type="Bgee" id="373646">
    <property type="expression patterns" value="Expressed in gastrula and 16 other cell types or tissues"/>
</dbReference>
<dbReference type="GO" id="GO:0005615">
    <property type="term" value="C:extracellular space"/>
    <property type="evidence" value="ECO:0000318"/>
    <property type="project" value="GO_Central"/>
</dbReference>
<dbReference type="GO" id="GO:0051216">
    <property type="term" value="P:cartilage development"/>
    <property type="evidence" value="ECO:0007669"/>
    <property type="project" value="UniProtKB-KW"/>
</dbReference>
<dbReference type="GO" id="GO:0009953">
    <property type="term" value="P:dorsal/ventral pattern formation"/>
    <property type="evidence" value="ECO:0000318"/>
    <property type="project" value="GO_Central"/>
</dbReference>
<dbReference type="GO" id="GO:0007517">
    <property type="term" value="P:muscle organ development"/>
    <property type="evidence" value="ECO:0000353"/>
    <property type="project" value="UniProtKB"/>
</dbReference>
<dbReference type="GO" id="GO:0030514">
    <property type="term" value="P:negative regulation of BMP signaling pathway"/>
    <property type="evidence" value="ECO:0000314"/>
    <property type="project" value="CACAO"/>
</dbReference>
<dbReference type="GO" id="GO:0045596">
    <property type="term" value="P:negative regulation of cell differentiation"/>
    <property type="evidence" value="ECO:0007669"/>
    <property type="project" value="InterPro"/>
</dbReference>
<dbReference type="GO" id="GO:0001649">
    <property type="term" value="P:osteoblast differentiation"/>
    <property type="evidence" value="ECO:0000318"/>
    <property type="project" value="GO_Central"/>
</dbReference>
<dbReference type="FunFam" id="1.10.287.520:FF:000001">
    <property type="entry name" value="Noggin"/>
    <property type="match status" value="1"/>
</dbReference>
<dbReference type="Gene3D" id="2.10.90.10">
    <property type="entry name" value="Cystine-knot cytokines"/>
    <property type="match status" value="1"/>
</dbReference>
<dbReference type="Gene3D" id="1.10.287.520">
    <property type="entry name" value="Helix hairpin bin"/>
    <property type="match status" value="1"/>
</dbReference>
<dbReference type="InterPro" id="IPR029034">
    <property type="entry name" value="Cystine-knot_cytokine"/>
</dbReference>
<dbReference type="InterPro" id="IPR008717">
    <property type="entry name" value="Noggin"/>
</dbReference>
<dbReference type="PANTHER" id="PTHR10494">
    <property type="entry name" value="BONE MORPHOGENETIC PROTEIN INHIBITOR, NOGGIN"/>
    <property type="match status" value="1"/>
</dbReference>
<dbReference type="PANTHER" id="PTHR10494:SF5">
    <property type="entry name" value="NOGGIN"/>
    <property type="match status" value="1"/>
</dbReference>
<dbReference type="Pfam" id="PF05806">
    <property type="entry name" value="Noggin"/>
    <property type="match status" value="1"/>
</dbReference>
<dbReference type="PIRSF" id="PIRSF008129">
    <property type="entry name" value="Noggin"/>
    <property type="match status" value="1"/>
</dbReference>
<dbReference type="SUPFAM" id="SSF57501">
    <property type="entry name" value="Cystine-knot cytokines"/>
    <property type="match status" value="1"/>
</dbReference>
<name>NOGG_XENLA</name>
<sequence>MDHSQCLVTIYALMVFLGLRIDQGGCQHYLHIRPAPSENLPLVDLIEHPDPIYDPKEKDLNETLLRTLMVGHFDPNFMATILPEERLGVEDLGELDLLLRQKPSGAMPAEIKGLEFYEGLQSKKHRLSKKLRRKLQMWLWSQTFCPVLYTWNDLGTRFWPRYVKVGSCYSKRSCSVPEGMVCKAAKSMHLTILRWRCQRRVQQKCAWITIQYPVISECKCSC</sequence>
<gene>
    <name type="primary">nog</name>
</gene>
<keyword id="KW-0891">Chondrogenesis</keyword>
<keyword id="KW-0217">Developmental protein</keyword>
<keyword id="KW-0221">Differentiation</keyword>
<keyword id="KW-1015">Disulfide bond</keyword>
<keyword id="KW-0325">Glycoprotein</keyword>
<keyword id="KW-1185">Reference proteome</keyword>
<keyword id="KW-0964">Secreted</keyword>
<keyword id="KW-0732">Signal</keyword>
<organism>
    <name type="scientific">Xenopus laevis</name>
    <name type="common">African clawed frog</name>
    <dbReference type="NCBI Taxonomy" id="8355"/>
    <lineage>
        <taxon>Eukaryota</taxon>
        <taxon>Metazoa</taxon>
        <taxon>Chordata</taxon>
        <taxon>Craniata</taxon>
        <taxon>Vertebrata</taxon>
        <taxon>Euteleostomi</taxon>
        <taxon>Amphibia</taxon>
        <taxon>Batrachia</taxon>
        <taxon>Anura</taxon>
        <taxon>Pipoidea</taxon>
        <taxon>Pipidae</taxon>
        <taxon>Xenopodinae</taxon>
        <taxon>Xenopus</taxon>
        <taxon>Xenopus</taxon>
    </lineage>
</organism>
<reference key="1">
    <citation type="journal article" date="1992" name="Cell">
        <title>Expression cloning of noggin, a new dorsalizing factor localized to the Spemann organizer in Xenopus embryos.</title>
        <authorList>
            <person name="Smith W.C."/>
            <person name="Harland R.M."/>
        </authorList>
    </citation>
    <scope>NUCLEOTIDE SEQUENCE [MRNA]</scope>
</reference>
<reference key="2">
    <citation type="journal article" date="1993" name="Nature">
        <title>Secreted noggin protein mimics the Spemann organizer in dorsalizing Xenopus mesoderm.</title>
        <authorList>
            <person name="Smith W.C."/>
            <person name="Knecht A.K."/>
            <person name="Wu M."/>
            <person name="Harland R.M."/>
        </authorList>
    </citation>
    <scope>CHARACTERIZATION</scope>
</reference>
<reference key="3">
    <citation type="journal article" date="1996" name="Cell">
        <title>The Spemann organizer signal noggin binds and inactivates bone morphogenetic protein 4.</title>
        <authorList>
            <person name="Zimmerman L.B."/>
            <person name="De Jesus-Escobar J.M."/>
            <person name="Harland R.M."/>
        </authorList>
    </citation>
    <scope>FUNCTION</scope>
</reference>